<organism>
    <name type="scientific">Acidothermus cellulolyticus (strain ATCC 43068 / DSM 8971 / 11B)</name>
    <dbReference type="NCBI Taxonomy" id="351607"/>
    <lineage>
        <taxon>Bacteria</taxon>
        <taxon>Bacillati</taxon>
        <taxon>Actinomycetota</taxon>
        <taxon>Actinomycetes</taxon>
        <taxon>Acidothermales</taxon>
        <taxon>Acidothermaceae</taxon>
        <taxon>Acidothermus</taxon>
    </lineage>
</organism>
<accession>A0LV11</accession>
<keyword id="KW-0004">4Fe-4S</keyword>
<keyword id="KW-0963">Cytoplasm</keyword>
<keyword id="KW-0408">Iron</keyword>
<keyword id="KW-0411">Iron-sulfur</keyword>
<keyword id="KW-0479">Metal-binding</keyword>
<keyword id="KW-1185">Reference proteome</keyword>
<keyword id="KW-0949">S-adenosyl-L-methionine</keyword>
<keyword id="KW-0808">Transferase</keyword>
<name>RIMO_ACIC1</name>
<gene>
    <name evidence="1" type="primary">rimO</name>
    <name type="ordered locus">Acel_1499</name>
</gene>
<comment type="function">
    <text evidence="1">Catalyzes the methylthiolation of an aspartic acid residue of ribosomal protein uS12.</text>
</comment>
<comment type="catalytic activity">
    <reaction evidence="1">
        <text>L-aspartate(89)-[ribosomal protein uS12]-hydrogen + (sulfur carrier)-SH + AH2 + 2 S-adenosyl-L-methionine = 3-methylsulfanyl-L-aspartate(89)-[ribosomal protein uS12]-hydrogen + (sulfur carrier)-H + 5'-deoxyadenosine + L-methionine + A + S-adenosyl-L-homocysteine + 2 H(+)</text>
        <dbReference type="Rhea" id="RHEA:37087"/>
        <dbReference type="Rhea" id="RHEA-COMP:10460"/>
        <dbReference type="Rhea" id="RHEA-COMP:10461"/>
        <dbReference type="Rhea" id="RHEA-COMP:14737"/>
        <dbReference type="Rhea" id="RHEA-COMP:14739"/>
        <dbReference type="ChEBI" id="CHEBI:13193"/>
        <dbReference type="ChEBI" id="CHEBI:15378"/>
        <dbReference type="ChEBI" id="CHEBI:17319"/>
        <dbReference type="ChEBI" id="CHEBI:17499"/>
        <dbReference type="ChEBI" id="CHEBI:29917"/>
        <dbReference type="ChEBI" id="CHEBI:29961"/>
        <dbReference type="ChEBI" id="CHEBI:57844"/>
        <dbReference type="ChEBI" id="CHEBI:57856"/>
        <dbReference type="ChEBI" id="CHEBI:59789"/>
        <dbReference type="ChEBI" id="CHEBI:64428"/>
        <dbReference type="ChEBI" id="CHEBI:73599"/>
        <dbReference type="EC" id="2.8.4.4"/>
    </reaction>
</comment>
<comment type="cofactor">
    <cofactor evidence="1">
        <name>[4Fe-4S] cluster</name>
        <dbReference type="ChEBI" id="CHEBI:49883"/>
    </cofactor>
    <text evidence="1">Binds 2 [4Fe-4S] clusters. One cluster is coordinated with 3 cysteines and an exchangeable S-adenosyl-L-methionine.</text>
</comment>
<comment type="subcellular location">
    <subcellularLocation>
        <location evidence="1">Cytoplasm</location>
    </subcellularLocation>
</comment>
<comment type="similarity">
    <text evidence="1">Belongs to the methylthiotransferase family. RimO subfamily.</text>
</comment>
<sequence length="475" mass="50920">MPASRTVRLIRLGCARNDVDAEELAARLVDAGWRLTEAPSADVTVVNTCGFIEAAKQESIDTLLEAADGSTRVVAVGCLAERYGAALADAMPEATILSFDDYPVIAQRLEDVLAGRPPAPHTPRDRRTLLPLTPVDRPRAAAEVGIPGHLGGPRVLRHRLDDSPVAPLKIASGCDRRCTFCAIPSFRGAFVSRPPADILREAQWLADHGAREIVLVSENSTSYGKDLGDPFALEKLLAAFGGVDGLVRVRVTYLQPAEVRPALIDVIATAPHVAPYFDLSFQHASPRVLRRMRRFGGSEEFLNLLAEIRRRNPRAAVRSNVIVGFPGETEEDVAELGEFLRAARLDGIGVFGYSDEDGTEASGFPEKIPEQEIRSRVDDIAGIAEEVTADRARARLGETVDVLIDGVDDDRPDACYGYTEVQAVDVDGVTVLRDCSAARGALVRAEIVEIDGVDFLAAPVTGSTAGTPSGATVEG</sequence>
<feature type="chain" id="PRO_0000374675" description="Ribosomal protein uS12 methylthiotransferase RimO">
    <location>
        <begin position="1"/>
        <end position="475"/>
    </location>
</feature>
<feature type="domain" description="MTTase N-terminal" evidence="1">
    <location>
        <begin position="5"/>
        <end position="114"/>
    </location>
</feature>
<feature type="domain" description="Radical SAM core" evidence="2">
    <location>
        <begin position="160"/>
        <end position="390"/>
    </location>
</feature>
<feature type="domain" description="TRAM" evidence="1">
    <location>
        <begin position="393"/>
        <end position="461"/>
    </location>
</feature>
<feature type="binding site" evidence="1">
    <location>
        <position position="14"/>
    </location>
    <ligand>
        <name>[4Fe-4S] cluster</name>
        <dbReference type="ChEBI" id="CHEBI:49883"/>
        <label>1</label>
    </ligand>
</feature>
<feature type="binding site" evidence="1">
    <location>
        <position position="49"/>
    </location>
    <ligand>
        <name>[4Fe-4S] cluster</name>
        <dbReference type="ChEBI" id="CHEBI:49883"/>
        <label>1</label>
    </ligand>
</feature>
<feature type="binding site" evidence="1">
    <location>
        <position position="78"/>
    </location>
    <ligand>
        <name>[4Fe-4S] cluster</name>
        <dbReference type="ChEBI" id="CHEBI:49883"/>
        <label>1</label>
    </ligand>
</feature>
<feature type="binding site" evidence="1">
    <location>
        <position position="174"/>
    </location>
    <ligand>
        <name>[4Fe-4S] cluster</name>
        <dbReference type="ChEBI" id="CHEBI:49883"/>
        <label>2</label>
        <note>4Fe-4S-S-AdoMet</note>
    </ligand>
</feature>
<feature type="binding site" evidence="1">
    <location>
        <position position="178"/>
    </location>
    <ligand>
        <name>[4Fe-4S] cluster</name>
        <dbReference type="ChEBI" id="CHEBI:49883"/>
        <label>2</label>
        <note>4Fe-4S-S-AdoMet</note>
    </ligand>
</feature>
<feature type="binding site" evidence="1">
    <location>
        <position position="181"/>
    </location>
    <ligand>
        <name>[4Fe-4S] cluster</name>
        <dbReference type="ChEBI" id="CHEBI:49883"/>
        <label>2</label>
        <note>4Fe-4S-S-AdoMet</note>
    </ligand>
</feature>
<reference key="1">
    <citation type="journal article" date="2009" name="Genome Res.">
        <title>Complete genome of the cellulolytic thermophile Acidothermus cellulolyticus 11B provides insights into its ecophysiological and evolutionary adaptations.</title>
        <authorList>
            <person name="Barabote R.D."/>
            <person name="Xie G."/>
            <person name="Leu D.H."/>
            <person name="Normand P."/>
            <person name="Necsulea A."/>
            <person name="Daubin V."/>
            <person name="Medigue C."/>
            <person name="Adney W.S."/>
            <person name="Xu X.C."/>
            <person name="Lapidus A."/>
            <person name="Parales R.E."/>
            <person name="Detter C."/>
            <person name="Pujic P."/>
            <person name="Bruce D."/>
            <person name="Lavire C."/>
            <person name="Challacombe J.F."/>
            <person name="Brettin T.S."/>
            <person name="Berry A.M."/>
        </authorList>
    </citation>
    <scope>NUCLEOTIDE SEQUENCE [LARGE SCALE GENOMIC DNA]</scope>
    <source>
        <strain>ATCC 43068 / DSM 8971 / 11B</strain>
    </source>
</reference>
<evidence type="ECO:0000255" key="1">
    <source>
        <dbReference type="HAMAP-Rule" id="MF_01865"/>
    </source>
</evidence>
<evidence type="ECO:0000255" key="2">
    <source>
        <dbReference type="PROSITE-ProRule" id="PRU01266"/>
    </source>
</evidence>
<protein>
    <recommendedName>
        <fullName evidence="1">Ribosomal protein uS12 methylthiotransferase RimO</fullName>
        <shortName evidence="1">uS12 MTTase</shortName>
        <shortName evidence="1">uS12 methylthiotransferase</shortName>
        <ecNumber evidence="1">2.8.4.4</ecNumber>
    </recommendedName>
    <alternativeName>
        <fullName evidence="1">Ribosomal protein uS12 (aspartate-C(3))-methylthiotransferase</fullName>
    </alternativeName>
    <alternativeName>
        <fullName evidence="1">Ribosome maturation factor RimO</fullName>
    </alternativeName>
</protein>
<proteinExistence type="inferred from homology"/>
<dbReference type="EC" id="2.8.4.4" evidence="1"/>
<dbReference type="EMBL" id="CP000481">
    <property type="protein sequence ID" value="ABK53271.1"/>
    <property type="molecule type" value="Genomic_DNA"/>
</dbReference>
<dbReference type="RefSeq" id="WP_011720334.1">
    <property type="nucleotide sequence ID" value="NC_008578.1"/>
</dbReference>
<dbReference type="SMR" id="A0LV11"/>
<dbReference type="STRING" id="351607.Acel_1499"/>
<dbReference type="KEGG" id="ace:Acel_1499"/>
<dbReference type="eggNOG" id="COG0621">
    <property type="taxonomic scope" value="Bacteria"/>
</dbReference>
<dbReference type="HOGENOM" id="CLU_018697_0_1_11"/>
<dbReference type="InParanoid" id="A0LV11"/>
<dbReference type="OrthoDB" id="9805215at2"/>
<dbReference type="Proteomes" id="UP000008221">
    <property type="component" value="Chromosome"/>
</dbReference>
<dbReference type="GO" id="GO:0005829">
    <property type="term" value="C:cytosol"/>
    <property type="evidence" value="ECO:0007669"/>
    <property type="project" value="TreeGrafter"/>
</dbReference>
<dbReference type="GO" id="GO:0051539">
    <property type="term" value="F:4 iron, 4 sulfur cluster binding"/>
    <property type="evidence" value="ECO:0007669"/>
    <property type="project" value="UniProtKB-UniRule"/>
</dbReference>
<dbReference type="GO" id="GO:0035599">
    <property type="term" value="F:aspartic acid methylthiotransferase activity"/>
    <property type="evidence" value="ECO:0007669"/>
    <property type="project" value="TreeGrafter"/>
</dbReference>
<dbReference type="GO" id="GO:0046872">
    <property type="term" value="F:metal ion binding"/>
    <property type="evidence" value="ECO:0007669"/>
    <property type="project" value="UniProtKB-KW"/>
</dbReference>
<dbReference type="GO" id="GO:0103039">
    <property type="term" value="F:protein methylthiotransferase activity"/>
    <property type="evidence" value="ECO:0007669"/>
    <property type="project" value="UniProtKB-EC"/>
</dbReference>
<dbReference type="GO" id="GO:0006400">
    <property type="term" value="P:tRNA modification"/>
    <property type="evidence" value="ECO:0007669"/>
    <property type="project" value="InterPro"/>
</dbReference>
<dbReference type="CDD" id="cd01335">
    <property type="entry name" value="Radical_SAM"/>
    <property type="match status" value="1"/>
</dbReference>
<dbReference type="FunFam" id="3.80.30.20:FF:000001">
    <property type="entry name" value="tRNA-2-methylthio-N(6)-dimethylallyladenosine synthase 2"/>
    <property type="match status" value="1"/>
</dbReference>
<dbReference type="Gene3D" id="3.40.50.12160">
    <property type="entry name" value="Methylthiotransferase, N-terminal domain"/>
    <property type="match status" value="1"/>
</dbReference>
<dbReference type="Gene3D" id="2.40.50.140">
    <property type="entry name" value="Nucleic acid-binding proteins"/>
    <property type="match status" value="1"/>
</dbReference>
<dbReference type="Gene3D" id="3.80.30.20">
    <property type="entry name" value="tm_1862 like domain"/>
    <property type="match status" value="1"/>
</dbReference>
<dbReference type="HAMAP" id="MF_01865">
    <property type="entry name" value="MTTase_RimO"/>
    <property type="match status" value="1"/>
</dbReference>
<dbReference type="InterPro" id="IPR006638">
    <property type="entry name" value="Elp3/MiaA/NifB-like_rSAM"/>
</dbReference>
<dbReference type="InterPro" id="IPR005839">
    <property type="entry name" value="Methylthiotransferase"/>
</dbReference>
<dbReference type="InterPro" id="IPR020612">
    <property type="entry name" value="Methylthiotransferase_CS"/>
</dbReference>
<dbReference type="InterPro" id="IPR013848">
    <property type="entry name" value="Methylthiotransferase_N"/>
</dbReference>
<dbReference type="InterPro" id="IPR038135">
    <property type="entry name" value="Methylthiotransferase_N_sf"/>
</dbReference>
<dbReference type="InterPro" id="IPR012340">
    <property type="entry name" value="NA-bd_OB-fold"/>
</dbReference>
<dbReference type="InterPro" id="IPR005840">
    <property type="entry name" value="Ribosomal_uS12_MeSTrfase_RimO"/>
</dbReference>
<dbReference type="InterPro" id="IPR007197">
    <property type="entry name" value="rSAM"/>
</dbReference>
<dbReference type="InterPro" id="IPR023404">
    <property type="entry name" value="rSAM_horseshoe"/>
</dbReference>
<dbReference type="InterPro" id="IPR002792">
    <property type="entry name" value="TRAM_dom"/>
</dbReference>
<dbReference type="NCBIfam" id="TIGR01125">
    <property type="entry name" value="30S ribosomal protein S12 methylthiotransferase RimO"/>
    <property type="match status" value="1"/>
</dbReference>
<dbReference type="NCBIfam" id="TIGR00089">
    <property type="entry name" value="MiaB/RimO family radical SAM methylthiotransferase"/>
    <property type="match status" value="1"/>
</dbReference>
<dbReference type="PANTHER" id="PTHR43837">
    <property type="entry name" value="RIBOSOMAL PROTEIN S12 METHYLTHIOTRANSFERASE RIMO"/>
    <property type="match status" value="1"/>
</dbReference>
<dbReference type="PANTHER" id="PTHR43837:SF1">
    <property type="entry name" value="RIBOSOMAL PROTEIN US12 METHYLTHIOTRANSFERASE RIMO"/>
    <property type="match status" value="1"/>
</dbReference>
<dbReference type="Pfam" id="PF04055">
    <property type="entry name" value="Radical_SAM"/>
    <property type="match status" value="1"/>
</dbReference>
<dbReference type="Pfam" id="PF18693">
    <property type="entry name" value="TRAM_2"/>
    <property type="match status" value="1"/>
</dbReference>
<dbReference type="Pfam" id="PF00919">
    <property type="entry name" value="UPF0004"/>
    <property type="match status" value="1"/>
</dbReference>
<dbReference type="SFLD" id="SFLDG01082">
    <property type="entry name" value="B12-binding_domain_containing"/>
    <property type="match status" value="1"/>
</dbReference>
<dbReference type="SFLD" id="SFLDS00029">
    <property type="entry name" value="Radical_SAM"/>
    <property type="match status" value="1"/>
</dbReference>
<dbReference type="SFLD" id="SFLDF00274">
    <property type="entry name" value="ribosomal_protein_S12_methylth"/>
    <property type="match status" value="1"/>
</dbReference>
<dbReference type="SMART" id="SM00729">
    <property type="entry name" value="Elp3"/>
    <property type="match status" value="1"/>
</dbReference>
<dbReference type="SUPFAM" id="SSF102114">
    <property type="entry name" value="Radical SAM enzymes"/>
    <property type="match status" value="1"/>
</dbReference>
<dbReference type="PROSITE" id="PS51449">
    <property type="entry name" value="MTTASE_N"/>
    <property type="match status" value="1"/>
</dbReference>
<dbReference type="PROSITE" id="PS01278">
    <property type="entry name" value="MTTASE_RADICAL"/>
    <property type="match status" value="1"/>
</dbReference>
<dbReference type="PROSITE" id="PS51918">
    <property type="entry name" value="RADICAL_SAM"/>
    <property type="match status" value="1"/>
</dbReference>